<comment type="function">
    <text evidence="2">Oxidosqualene cyclase that specifically catalyzes the biosynthesis of lupeol.</text>
</comment>
<comment type="catalytic activity">
    <reaction evidence="2">
        <text>(S)-2,3-epoxysqualene = lupeol</text>
        <dbReference type="Rhea" id="RHEA:31383"/>
        <dbReference type="ChEBI" id="CHEBI:6570"/>
        <dbReference type="ChEBI" id="CHEBI:15441"/>
        <dbReference type="EC" id="5.4.99.41"/>
    </reaction>
    <physiologicalReaction direction="left-to-right" evidence="5">
        <dbReference type="Rhea" id="RHEA:31384"/>
    </physiologicalReaction>
</comment>
<comment type="pathway">
    <text evidence="5">Terpene metabolism.</text>
</comment>
<comment type="similarity">
    <text evidence="4">Belongs to the terpene cyclase/mutase family.</text>
</comment>
<name>LUPS_BRUGY</name>
<evidence type="ECO:0000250" key="1">
    <source>
        <dbReference type="UniProtKB" id="P48449"/>
    </source>
</evidence>
<evidence type="ECO:0000269" key="2">
    <source>
    </source>
</evidence>
<evidence type="ECO:0000303" key="3">
    <source>
    </source>
</evidence>
<evidence type="ECO:0000305" key="4"/>
<evidence type="ECO:0000305" key="5">
    <source>
    </source>
</evidence>
<dbReference type="EC" id="5.4.99.41" evidence="2"/>
<dbReference type="EMBL" id="AB289586">
    <property type="protein sequence ID" value="BAF80444.1"/>
    <property type="molecule type" value="mRNA"/>
</dbReference>
<dbReference type="SMR" id="A8CDT3"/>
<dbReference type="KEGG" id="ag:BAF80444"/>
<dbReference type="BioCyc" id="MetaCyc:MONOMER-14452"/>
<dbReference type="BRENDA" id="5.4.99.41">
    <property type="organism ID" value="1002"/>
</dbReference>
<dbReference type="GO" id="GO:0005811">
    <property type="term" value="C:lipid droplet"/>
    <property type="evidence" value="ECO:0007669"/>
    <property type="project" value="InterPro"/>
</dbReference>
<dbReference type="GO" id="GO:0042300">
    <property type="term" value="F:beta-amyrin synthase activity"/>
    <property type="evidence" value="ECO:0007669"/>
    <property type="project" value="TreeGrafter"/>
</dbReference>
<dbReference type="GO" id="GO:0042299">
    <property type="term" value="F:lupeol synthase activity"/>
    <property type="evidence" value="ECO:0000314"/>
    <property type="project" value="UniProtKB"/>
</dbReference>
<dbReference type="GO" id="GO:0016104">
    <property type="term" value="P:triterpenoid biosynthetic process"/>
    <property type="evidence" value="ECO:0000314"/>
    <property type="project" value="UniProtKB"/>
</dbReference>
<dbReference type="CDD" id="cd02892">
    <property type="entry name" value="SQCY_1"/>
    <property type="match status" value="1"/>
</dbReference>
<dbReference type="FunFam" id="1.50.10.20:FF:000044">
    <property type="entry name" value="Lupeol synthase"/>
    <property type="match status" value="1"/>
</dbReference>
<dbReference type="FunFam" id="1.50.10.20:FF:000011">
    <property type="entry name" value="Terpene cyclase/mutase family member"/>
    <property type="match status" value="1"/>
</dbReference>
<dbReference type="Gene3D" id="1.50.10.20">
    <property type="match status" value="2"/>
</dbReference>
<dbReference type="InterPro" id="IPR032696">
    <property type="entry name" value="SQ_cyclase_C"/>
</dbReference>
<dbReference type="InterPro" id="IPR032697">
    <property type="entry name" value="SQ_cyclase_N"/>
</dbReference>
<dbReference type="InterPro" id="IPR018333">
    <property type="entry name" value="Squalene_cyclase"/>
</dbReference>
<dbReference type="InterPro" id="IPR008930">
    <property type="entry name" value="Terpenoid_cyclase/PrenylTrfase"/>
</dbReference>
<dbReference type="NCBIfam" id="TIGR01787">
    <property type="entry name" value="squalene_cyclas"/>
    <property type="match status" value="1"/>
</dbReference>
<dbReference type="PANTHER" id="PTHR11764">
    <property type="entry name" value="TERPENE CYCLASE/MUTASE FAMILY MEMBER"/>
    <property type="match status" value="1"/>
</dbReference>
<dbReference type="PANTHER" id="PTHR11764:SF48">
    <property type="entry name" value="TERPENE CYCLASE_MUTASE FAMILY MEMBER"/>
    <property type="match status" value="1"/>
</dbReference>
<dbReference type="Pfam" id="PF13243">
    <property type="entry name" value="SQHop_cyclase_C"/>
    <property type="match status" value="1"/>
</dbReference>
<dbReference type="Pfam" id="PF13249">
    <property type="entry name" value="SQHop_cyclase_N"/>
    <property type="match status" value="1"/>
</dbReference>
<dbReference type="SFLD" id="SFLDG01016">
    <property type="entry name" value="Prenyltransferase_Like_2"/>
    <property type="match status" value="1"/>
</dbReference>
<dbReference type="SUPFAM" id="SSF48239">
    <property type="entry name" value="Terpenoid cyclases/Protein prenyltransferases"/>
    <property type="match status" value="2"/>
</dbReference>
<protein>
    <recommendedName>
        <fullName evidence="3">Lupeol synthase</fullName>
        <shortName evidence="3">BgLUS</shortName>
        <ecNumber evidence="2">5.4.99.41</ecNumber>
    </recommendedName>
</protein>
<accession>A8CDT3</accession>
<proteinExistence type="evidence at protein level"/>
<feature type="chain" id="PRO_0000412990" description="Lupeol synthase">
    <location>
        <begin position="1"/>
        <end position="761"/>
    </location>
</feature>
<feature type="repeat" description="PFTB 1">
    <location>
        <begin position="148"/>
        <end position="189"/>
    </location>
</feature>
<feature type="repeat" description="PFTB 2">
    <location>
        <begin position="639"/>
        <end position="680"/>
    </location>
</feature>
<feature type="active site" description="Proton donor" evidence="1">
    <location>
        <position position="484"/>
    </location>
</feature>
<sequence>MWRLKIAEGGNNPYIYSTNNFVGRQTWEFDPEAGTPEERAQVEEARENFWRDRFLIKPSSDLLWRFQFLSEKKFKQRIPQVKVQDGEEITREIATTALRRSVHLVSALQASDGHWCAENSGPMFFVPPMVFSLYITGHLNAVFSAEHCKEILRYIYCHPNEDGGWGLHIEGHSAMFSTVLNYNWLGKLGEGRDGGKDNACERARRRILDHGSATAISSWGKTWLAILGVYEWDGCNPMPPEFWAFPTFFPIHPARMLCYCRLTYMAMSYLYGKKFVGPITPLILQLREEIYNEPYDQINWSRMRHLCAKEDNYYAHTLTQIILWDAIYMLGEPLLKRWPFNKLREKALKITMDHIHYEDENSQYITIGSVEKPLLMLACWHEDPNGDAFKKHLARIPDYVWLGEDGIKIQSFGSQVWDTSFVLQALIASNLPSETGPTLEKGHNFIKNSQVTQNPSGDFRRMFRHISKGSWTFSDKDHGWQVSDCTAESLKCCLLFSMMPPELVGEKMGPQRMYDAVNVIISLQSKNGGCSAWEPAGAGSWMEWLNPVEFLADLVIEHEYVECTSSSLQALVLFKKLYPEHRRKEIEIFILNAVRFTEEIQQPDGSWYGNWGICFLSGTWFGLKGLAAAGKTYYNCTAVRKGVEFLLQTQRDDGGWGESYLSCPKKIYVPLEGNRSNLVQTALAMMGLILGGQGERDPTPLHRAAKLLINSQTELGDFPQQELSGCFMRNCMLHYSEYRDIFPTWALAEYCKLFPLPSKND</sequence>
<organism>
    <name type="scientific">Bruguiera gymnorhiza</name>
    <name type="common">Burma mangrove</name>
    <name type="synonym">Rhizophora gymnorhiza</name>
    <dbReference type="NCBI Taxonomy" id="39984"/>
    <lineage>
        <taxon>Eukaryota</taxon>
        <taxon>Viridiplantae</taxon>
        <taxon>Streptophyta</taxon>
        <taxon>Embryophyta</taxon>
        <taxon>Tracheophyta</taxon>
        <taxon>Spermatophyta</taxon>
        <taxon>Magnoliopsida</taxon>
        <taxon>eudicotyledons</taxon>
        <taxon>Gunneridae</taxon>
        <taxon>Pentapetalae</taxon>
        <taxon>rosids</taxon>
        <taxon>fabids</taxon>
        <taxon>Malpighiales</taxon>
        <taxon>Rhizophoraceae</taxon>
        <taxon>Bruguiera</taxon>
    </lineage>
</organism>
<gene>
    <name type="primary">LUS</name>
</gene>
<keyword id="KW-0413">Isomerase</keyword>
<keyword id="KW-0677">Repeat</keyword>
<reference key="1">
    <citation type="journal article" date="2007" name="FEBS J.">
        <title>Triterpene synthases from the Okinawan mangrove tribe, Rhizophoraceae.</title>
        <authorList>
            <person name="Basyuni M."/>
            <person name="Oku H."/>
            <person name="Tsujimoto E."/>
            <person name="Kinjo K."/>
            <person name="Baba S."/>
            <person name="Takara K."/>
        </authorList>
    </citation>
    <scope>NUCLEOTIDE SEQUENCE [MRNA]</scope>
    <scope>FUNCTION</scope>
    <scope>CATALYTIC ACTIVITY</scope>
    <source>
        <tissue>Leaf</tissue>
    </source>
</reference>